<organism>
    <name type="scientific">Francisella philomiragia subsp. philomiragia (strain ATCC 25017 / CCUG 19701 / FSC 153 / O#319-036)</name>
    <dbReference type="NCBI Taxonomy" id="484022"/>
    <lineage>
        <taxon>Bacteria</taxon>
        <taxon>Pseudomonadati</taxon>
        <taxon>Pseudomonadota</taxon>
        <taxon>Gammaproteobacteria</taxon>
        <taxon>Thiotrichales</taxon>
        <taxon>Francisellaceae</taxon>
        <taxon>Francisella</taxon>
    </lineage>
</organism>
<gene>
    <name evidence="1" type="primary">secA</name>
    <name type="ordered locus">Fphi_0149</name>
</gene>
<name>SECA_FRAP2</name>
<reference key="1">
    <citation type="submission" date="2007-12" db="EMBL/GenBank/DDBJ databases">
        <title>Complete sequence of chromosome of Francisella philomiragia subsp. philomiragia ATCC 25017.</title>
        <authorList>
            <consortium name="US DOE Joint Genome Institute"/>
            <person name="Copeland A."/>
            <person name="Lucas S."/>
            <person name="Lapidus A."/>
            <person name="Barry K."/>
            <person name="Detter J.C."/>
            <person name="Glavina del Rio T."/>
            <person name="Hammon N."/>
            <person name="Israni S."/>
            <person name="Dalin E."/>
            <person name="Tice H."/>
            <person name="Pitluck S."/>
            <person name="Chain P."/>
            <person name="Malfatti S."/>
            <person name="Shin M."/>
            <person name="Vergez L."/>
            <person name="Schmutz J."/>
            <person name="Larimer F."/>
            <person name="Land M."/>
            <person name="Hauser L."/>
            <person name="Richardson P."/>
        </authorList>
    </citation>
    <scope>NUCLEOTIDE SEQUENCE [LARGE SCALE GENOMIC DNA]</scope>
    <source>
        <strain>ATCC 25017 / CCUG 19701 / FSC 153 / O#319-036</strain>
    </source>
</reference>
<feature type="chain" id="PRO_1000087318" description="Protein translocase subunit SecA">
    <location>
        <begin position="1"/>
        <end position="907"/>
    </location>
</feature>
<feature type="region of interest" description="Disordered" evidence="2">
    <location>
        <begin position="838"/>
        <end position="907"/>
    </location>
</feature>
<feature type="compositionally biased region" description="Basic and acidic residues" evidence="2">
    <location>
        <begin position="838"/>
        <end position="856"/>
    </location>
</feature>
<feature type="compositionally biased region" description="Basic and acidic residues" evidence="2">
    <location>
        <begin position="869"/>
        <end position="888"/>
    </location>
</feature>
<feature type="compositionally biased region" description="Basic residues" evidence="2">
    <location>
        <begin position="896"/>
        <end position="907"/>
    </location>
</feature>
<feature type="binding site" evidence="1">
    <location>
        <position position="86"/>
    </location>
    <ligand>
        <name>ATP</name>
        <dbReference type="ChEBI" id="CHEBI:30616"/>
    </ligand>
</feature>
<feature type="binding site" evidence="1">
    <location>
        <begin position="104"/>
        <end position="108"/>
    </location>
    <ligand>
        <name>ATP</name>
        <dbReference type="ChEBI" id="CHEBI:30616"/>
    </ligand>
</feature>
<feature type="binding site" evidence="1">
    <location>
        <position position="511"/>
    </location>
    <ligand>
        <name>ATP</name>
        <dbReference type="ChEBI" id="CHEBI:30616"/>
    </ligand>
</feature>
<feature type="binding site" evidence="1">
    <location>
        <position position="890"/>
    </location>
    <ligand>
        <name>Zn(2+)</name>
        <dbReference type="ChEBI" id="CHEBI:29105"/>
    </ligand>
</feature>
<feature type="binding site" evidence="1">
    <location>
        <position position="892"/>
    </location>
    <ligand>
        <name>Zn(2+)</name>
        <dbReference type="ChEBI" id="CHEBI:29105"/>
    </ligand>
</feature>
<feature type="binding site" evidence="1">
    <location>
        <position position="901"/>
    </location>
    <ligand>
        <name>Zn(2+)</name>
        <dbReference type="ChEBI" id="CHEBI:29105"/>
    </ligand>
</feature>
<feature type="binding site" evidence="1">
    <location>
        <position position="902"/>
    </location>
    <ligand>
        <name>Zn(2+)</name>
        <dbReference type="ChEBI" id="CHEBI:29105"/>
    </ligand>
</feature>
<keyword id="KW-0067">ATP-binding</keyword>
<keyword id="KW-0997">Cell inner membrane</keyword>
<keyword id="KW-1003">Cell membrane</keyword>
<keyword id="KW-0963">Cytoplasm</keyword>
<keyword id="KW-0472">Membrane</keyword>
<keyword id="KW-0479">Metal-binding</keyword>
<keyword id="KW-0547">Nucleotide-binding</keyword>
<keyword id="KW-0653">Protein transport</keyword>
<keyword id="KW-1278">Translocase</keyword>
<keyword id="KW-0811">Translocation</keyword>
<keyword id="KW-0813">Transport</keyword>
<keyword id="KW-0862">Zinc</keyword>
<accession>B0TYK5</accession>
<sequence>MLNLVQKIIGSRNDRFIKKVSKTVQKINSLEPEFEKLSDQELKAKTQEYKDRVAKGEALDNLLPEAFATVREAGKRTKNMRHYDVQLIGGIVLHQGKVAEMRTGEGKTLVATLPAYLNALTGNGVHVITVNDYLAKRDAELMSDIYEFLGLSVGVIVADLNPEQRRESYACDITYGTNNEFGFDYLRDNMAYDKEQQVQRSRNYVIIDEVDSILIDEARTPLIISGASDDSSEMYNLFNRLVPFLEKQEKEELDEDQEQKDFYVDEKSKNAYLTEKGYAKIESMLKKEGILEEDDNLYSPHNITKMHYLNACLRAHSLYQLNIDYIVRDQEIVIIDESTGRAMPGRRWSDGLHQAIEAKEGVKINAENQTMASITFQNFFKLYNKIAGMTGTADTEAFELHSIYGLEVIIIPTNKPLIRKDHHDEIYGSVREKFDAIVEDIKQRISKGQPVLVGTASIEASEVLSTLLKKKKIRHNVLNAKQHEKEASIIAMAGYPGNVTIATNMAGRGTDIILGGNLEVEIAQLEDPTPEEVAQIKAEWVKRNEVVKNAGGLCIIGSERHDSRRIDNQLRGRAARQGDPGESKFYLSMDDNLLRIFASQSMAERVKKGLKGGESLAFGFMSKVISKAQGKVESYHFDIRKNLLEYDNVVNTQRKVIYEQRQAFLDSDDVSEILADIRIDVAEQLFHDYVPAGSMHELWDLEGLEKALKSDFMIEIDLQKLYEEDDNLGEEDLKKFVREAIEFEFAEKTKNLEVGAVRQFEKFSLLQSLDSHWREHLSSIDHLRNSINLRGYAQKDPKNEYKKEAFELFSTMLDNFKYEVISSLAKIRIATEEETQRAQEEWKESMSEIKAEHESVIDNNQSEDDKEQEEAPKVQQVKREGPKIKRNDPCPCGSGKKYKQCHGKVVD</sequence>
<comment type="function">
    <text evidence="1">Part of the Sec protein translocase complex. Interacts with the SecYEG preprotein conducting channel. Has a central role in coupling the hydrolysis of ATP to the transfer of proteins into and across the cell membrane, serving both as a receptor for the preprotein-SecB complex and as an ATP-driven molecular motor driving the stepwise translocation of polypeptide chains across the membrane.</text>
</comment>
<comment type="catalytic activity">
    <reaction evidence="1">
        <text>ATP + H2O + cellular proteinSide 1 = ADP + phosphate + cellular proteinSide 2.</text>
        <dbReference type="EC" id="7.4.2.8"/>
    </reaction>
</comment>
<comment type="cofactor">
    <cofactor evidence="1">
        <name>Zn(2+)</name>
        <dbReference type="ChEBI" id="CHEBI:29105"/>
    </cofactor>
    <text evidence="1">May bind 1 zinc ion per subunit.</text>
</comment>
<comment type="subunit">
    <text evidence="1">Monomer and homodimer. Part of the essential Sec protein translocation apparatus which comprises SecA, SecYEG and auxiliary proteins SecDF-YajC and YidC.</text>
</comment>
<comment type="subcellular location">
    <subcellularLocation>
        <location evidence="1">Cell inner membrane</location>
        <topology evidence="1">Peripheral membrane protein</topology>
        <orientation evidence="1">Cytoplasmic side</orientation>
    </subcellularLocation>
    <subcellularLocation>
        <location evidence="1">Cytoplasm</location>
    </subcellularLocation>
    <text evidence="1">Distribution is 50-50.</text>
</comment>
<comment type="similarity">
    <text evidence="1">Belongs to the SecA family.</text>
</comment>
<protein>
    <recommendedName>
        <fullName evidence="1">Protein translocase subunit SecA</fullName>
        <ecNumber evidence="1">7.4.2.8</ecNumber>
    </recommendedName>
</protein>
<proteinExistence type="inferred from homology"/>
<evidence type="ECO:0000255" key="1">
    <source>
        <dbReference type="HAMAP-Rule" id="MF_01382"/>
    </source>
</evidence>
<evidence type="ECO:0000256" key="2">
    <source>
        <dbReference type="SAM" id="MobiDB-lite"/>
    </source>
</evidence>
<dbReference type="EC" id="7.4.2.8" evidence="1"/>
<dbReference type="EMBL" id="CP000937">
    <property type="protein sequence ID" value="ABZ86370.1"/>
    <property type="molecule type" value="Genomic_DNA"/>
</dbReference>
<dbReference type="SMR" id="B0TYK5"/>
<dbReference type="KEGG" id="fph:Fphi_0149"/>
<dbReference type="eggNOG" id="COG0653">
    <property type="taxonomic scope" value="Bacteria"/>
</dbReference>
<dbReference type="HOGENOM" id="CLU_005314_3_0_6"/>
<dbReference type="GO" id="GO:0031522">
    <property type="term" value="C:cell envelope Sec protein transport complex"/>
    <property type="evidence" value="ECO:0007669"/>
    <property type="project" value="TreeGrafter"/>
</dbReference>
<dbReference type="GO" id="GO:0005829">
    <property type="term" value="C:cytosol"/>
    <property type="evidence" value="ECO:0007669"/>
    <property type="project" value="TreeGrafter"/>
</dbReference>
<dbReference type="GO" id="GO:0005886">
    <property type="term" value="C:plasma membrane"/>
    <property type="evidence" value="ECO:0007669"/>
    <property type="project" value="UniProtKB-SubCell"/>
</dbReference>
<dbReference type="GO" id="GO:0005524">
    <property type="term" value="F:ATP binding"/>
    <property type="evidence" value="ECO:0007669"/>
    <property type="project" value="UniProtKB-UniRule"/>
</dbReference>
<dbReference type="GO" id="GO:0046872">
    <property type="term" value="F:metal ion binding"/>
    <property type="evidence" value="ECO:0007669"/>
    <property type="project" value="UniProtKB-KW"/>
</dbReference>
<dbReference type="GO" id="GO:0008564">
    <property type="term" value="F:protein-exporting ATPase activity"/>
    <property type="evidence" value="ECO:0007669"/>
    <property type="project" value="UniProtKB-EC"/>
</dbReference>
<dbReference type="GO" id="GO:0065002">
    <property type="term" value="P:intracellular protein transmembrane transport"/>
    <property type="evidence" value="ECO:0007669"/>
    <property type="project" value="UniProtKB-UniRule"/>
</dbReference>
<dbReference type="GO" id="GO:0017038">
    <property type="term" value="P:protein import"/>
    <property type="evidence" value="ECO:0007669"/>
    <property type="project" value="InterPro"/>
</dbReference>
<dbReference type="GO" id="GO:0006605">
    <property type="term" value="P:protein targeting"/>
    <property type="evidence" value="ECO:0007669"/>
    <property type="project" value="UniProtKB-UniRule"/>
</dbReference>
<dbReference type="GO" id="GO:0043952">
    <property type="term" value="P:protein transport by the Sec complex"/>
    <property type="evidence" value="ECO:0007669"/>
    <property type="project" value="TreeGrafter"/>
</dbReference>
<dbReference type="CDD" id="cd17928">
    <property type="entry name" value="DEXDc_SecA"/>
    <property type="match status" value="1"/>
</dbReference>
<dbReference type="CDD" id="cd18803">
    <property type="entry name" value="SF2_C_secA"/>
    <property type="match status" value="1"/>
</dbReference>
<dbReference type="FunFam" id="3.40.50.300:FF:000113">
    <property type="entry name" value="Preprotein translocase subunit SecA"/>
    <property type="match status" value="1"/>
</dbReference>
<dbReference type="FunFam" id="3.90.1440.10:FF:000001">
    <property type="entry name" value="Preprotein translocase subunit SecA"/>
    <property type="match status" value="1"/>
</dbReference>
<dbReference type="FunFam" id="1.10.3060.10:FF:000003">
    <property type="entry name" value="Protein translocase subunit SecA"/>
    <property type="match status" value="1"/>
</dbReference>
<dbReference type="FunFam" id="3.40.50.300:FF:000334">
    <property type="entry name" value="Protein translocase subunit SecA"/>
    <property type="match status" value="1"/>
</dbReference>
<dbReference type="Gene3D" id="1.10.3060.10">
    <property type="entry name" value="Helical scaffold and wing domains of SecA"/>
    <property type="match status" value="1"/>
</dbReference>
<dbReference type="Gene3D" id="3.40.50.300">
    <property type="entry name" value="P-loop containing nucleotide triphosphate hydrolases"/>
    <property type="match status" value="2"/>
</dbReference>
<dbReference type="Gene3D" id="3.90.1440.10">
    <property type="entry name" value="SecA, preprotein cross-linking domain"/>
    <property type="match status" value="1"/>
</dbReference>
<dbReference type="HAMAP" id="MF_01382">
    <property type="entry name" value="SecA"/>
    <property type="match status" value="1"/>
</dbReference>
<dbReference type="InterPro" id="IPR014001">
    <property type="entry name" value="Helicase_ATP-bd"/>
</dbReference>
<dbReference type="InterPro" id="IPR001650">
    <property type="entry name" value="Helicase_C-like"/>
</dbReference>
<dbReference type="InterPro" id="IPR027417">
    <property type="entry name" value="P-loop_NTPase"/>
</dbReference>
<dbReference type="InterPro" id="IPR004027">
    <property type="entry name" value="SEC_C_motif"/>
</dbReference>
<dbReference type="InterPro" id="IPR000185">
    <property type="entry name" value="SecA"/>
</dbReference>
<dbReference type="InterPro" id="IPR020937">
    <property type="entry name" value="SecA_CS"/>
</dbReference>
<dbReference type="InterPro" id="IPR011115">
    <property type="entry name" value="SecA_DEAD"/>
</dbReference>
<dbReference type="InterPro" id="IPR014018">
    <property type="entry name" value="SecA_motor_DEAD"/>
</dbReference>
<dbReference type="InterPro" id="IPR011130">
    <property type="entry name" value="SecA_preprotein_X-link_dom"/>
</dbReference>
<dbReference type="InterPro" id="IPR044722">
    <property type="entry name" value="SecA_SF2_C"/>
</dbReference>
<dbReference type="InterPro" id="IPR011116">
    <property type="entry name" value="SecA_Wing/Scaffold"/>
</dbReference>
<dbReference type="InterPro" id="IPR036266">
    <property type="entry name" value="SecA_Wing/Scaffold_sf"/>
</dbReference>
<dbReference type="InterPro" id="IPR036670">
    <property type="entry name" value="SecA_X-link_sf"/>
</dbReference>
<dbReference type="NCBIfam" id="NF009538">
    <property type="entry name" value="PRK12904.1"/>
    <property type="match status" value="1"/>
</dbReference>
<dbReference type="NCBIfam" id="TIGR00963">
    <property type="entry name" value="secA"/>
    <property type="match status" value="1"/>
</dbReference>
<dbReference type="PANTHER" id="PTHR30612:SF0">
    <property type="entry name" value="CHLOROPLAST PROTEIN-TRANSPORTING ATPASE"/>
    <property type="match status" value="1"/>
</dbReference>
<dbReference type="PANTHER" id="PTHR30612">
    <property type="entry name" value="SECA INNER MEMBRANE COMPONENT OF SEC PROTEIN SECRETION SYSTEM"/>
    <property type="match status" value="1"/>
</dbReference>
<dbReference type="Pfam" id="PF21090">
    <property type="entry name" value="P-loop_SecA"/>
    <property type="match status" value="1"/>
</dbReference>
<dbReference type="Pfam" id="PF02810">
    <property type="entry name" value="SEC-C"/>
    <property type="match status" value="1"/>
</dbReference>
<dbReference type="Pfam" id="PF07517">
    <property type="entry name" value="SecA_DEAD"/>
    <property type="match status" value="1"/>
</dbReference>
<dbReference type="Pfam" id="PF01043">
    <property type="entry name" value="SecA_PP_bind"/>
    <property type="match status" value="1"/>
</dbReference>
<dbReference type="Pfam" id="PF07516">
    <property type="entry name" value="SecA_SW"/>
    <property type="match status" value="1"/>
</dbReference>
<dbReference type="PRINTS" id="PR00906">
    <property type="entry name" value="SECA"/>
</dbReference>
<dbReference type="SMART" id="SM00957">
    <property type="entry name" value="SecA_DEAD"/>
    <property type="match status" value="1"/>
</dbReference>
<dbReference type="SMART" id="SM00958">
    <property type="entry name" value="SecA_PP_bind"/>
    <property type="match status" value="1"/>
</dbReference>
<dbReference type="SUPFAM" id="SSF81886">
    <property type="entry name" value="Helical scaffold and wing domains of SecA"/>
    <property type="match status" value="1"/>
</dbReference>
<dbReference type="SUPFAM" id="SSF52540">
    <property type="entry name" value="P-loop containing nucleoside triphosphate hydrolases"/>
    <property type="match status" value="2"/>
</dbReference>
<dbReference type="SUPFAM" id="SSF81767">
    <property type="entry name" value="Pre-protein crosslinking domain of SecA"/>
    <property type="match status" value="1"/>
</dbReference>
<dbReference type="PROSITE" id="PS01312">
    <property type="entry name" value="SECA"/>
    <property type="match status" value="1"/>
</dbReference>
<dbReference type="PROSITE" id="PS51196">
    <property type="entry name" value="SECA_MOTOR_DEAD"/>
    <property type="match status" value="1"/>
</dbReference>